<protein>
    <recommendedName>
        <fullName>Methane monooxygenase component A beta chain</fullName>
        <ecNumber>1.14.13.25</ecNumber>
    </recommendedName>
    <alternativeName>
        <fullName>Methane hydroxylase</fullName>
    </alternativeName>
</protein>
<dbReference type="EC" id="1.14.13.25"/>
<dbReference type="EMBL" id="X55394">
    <property type="protein sequence ID" value="CAA39069.1"/>
    <property type="molecule type" value="Genomic_DNA"/>
</dbReference>
<dbReference type="PIR" id="S15208">
    <property type="entry name" value="S15208"/>
</dbReference>
<dbReference type="PDB" id="1MHY">
    <property type="method" value="X-ray"/>
    <property type="resolution" value="2.00 A"/>
    <property type="chains" value="B=1-394"/>
</dbReference>
<dbReference type="PDB" id="1MHZ">
    <property type="method" value="X-ray"/>
    <property type="resolution" value="2.70 A"/>
    <property type="chains" value="B=1-394"/>
</dbReference>
<dbReference type="PDBsum" id="1MHY"/>
<dbReference type="PDBsum" id="1MHZ"/>
<dbReference type="SMR" id="P27354"/>
<dbReference type="BioCyc" id="MetaCyc:MONOMER-3868"/>
<dbReference type="BRENDA" id="1.14.13.25">
    <property type="organism ID" value="3322"/>
</dbReference>
<dbReference type="EvolutionaryTrace" id="P27354"/>
<dbReference type="GO" id="GO:0015049">
    <property type="term" value="F:methane monooxygenase [NAD(P)H] activity"/>
    <property type="evidence" value="ECO:0007669"/>
    <property type="project" value="UniProtKB-EC"/>
</dbReference>
<dbReference type="GO" id="GO:0006730">
    <property type="term" value="P:one-carbon metabolic process"/>
    <property type="evidence" value="ECO:0007669"/>
    <property type="project" value="UniProtKB-KW"/>
</dbReference>
<dbReference type="CDD" id="cd01058">
    <property type="entry name" value="AAMH_B"/>
    <property type="match status" value="1"/>
</dbReference>
<dbReference type="Gene3D" id="1.10.620.20">
    <property type="entry name" value="Ribonucleotide Reductase, subunit A"/>
    <property type="match status" value="1"/>
</dbReference>
<dbReference type="InterPro" id="IPR009078">
    <property type="entry name" value="Ferritin-like_SF"/>
</dbReference>
<dbReference type="InterPro" id="IPR054956">
    <property type="entry name" value="MethMoxA_beta"/>
</dbReference>
<dbReference type="InterPro" id="IPR012078">
    <property type="entry name" value="MP_mOase_hydro"/>
</dbReference>
<dbReference type="InterPro" id="IPR003430">
    <property type="entry name" value="Phenol_Hydrox"/>
</dbReference>
<dbReference type="InterPro" id="IPR012348">
    <property type="entry name" value="RNR-like"/>
</dbReference>
<dbReference type="NCBIfam" id="NF045802">
    <property type="entry name" value="MethMoxAlphaMmoY"/>
    <property type="match status" value="1"/>
</dbReference>
<dbReference type="Pfam" id="PF02332">
    <property type="entry name" value="Phenol_Hydrox"/>
    <property type="match status" value="1"/>
</dbReference>
<dbReference type="PIRSF" id="PIRSF000040">
    <property type="entry name" value="MMOH_comp"/>
    <property type="match status" value="1"/>
</dbReference>
<dbReference type="SUPFAM" id="SSF47240">
    <property type="entry name" value="Ferritin-like"/>
    <property type="match status" value="1"/>
</dbReference>
<reference key="1">
    <citation type="journal article" date="1991" name="Mol. Microbiol.">
        <title>Molecular analysis of the methane monooxygenase (MMO) gene cluster of Methylosinus trichosporium OB3b.</title>
        <authorList>
            <person name="Cardy D.L.N."/>
            <person name="Laidler V."/>
            <person name="Salmond G.P.C."/>
            <person name="Murrell J.C."/>
        </authorList>
    </citation>
    <scope>NUCLEOTIDE SEQUENCE [GENOMIC DNA]</scope>
    <source>
        <strain>ATCC 35070 / NCIMB 11131 / ACM 3311 / OB3b</strain>
    </source>
</reference>
<reference key="2">
    <citation type="journal article" date="1991" name="J. Biol. Chem.">
        <title>Complex formation between the protein components of methane monooxygenase from Methylosinus trichosporium OB3b. Identification of sites of component interaction.</title>
        <authorList>
            <person name="Fox B.G."/>
            <person name="Liu Y."/>
            <person name="Dege J.E."/>
            <person name="Lipscomb J.D."/>
        </authorList>
    </citation>
    <scope>PROTEIN SEQUENCE OF 2-16</scope>
</reference>
<gene>
    <name type="primary">mmoY</name>
</gene>
<organism>
    <name type="scientific">Methylosinus trichosporium</name>
    <dbReference type="NCBI Taxonomy" id="426"/>
    <lineage>
        <taxon>Bacteria</taxon>
        <taxon>Pseudomonadati</taxon>
        <taxon>Pseudomonadota</taxon>
        <taxon>Alphaproteobacteria</taxon>
        <taxon>Hyphomicrobiales</taxon>
        <taxon>Methylocystaceae</taxon>
        <taxon>Methylosinus</taxon>
    </lineage>
</organism>
<proteinExistence type="evidence at protein level"/>
<evidence type="ECO:0000269" key="1">
    <source>
    </source>
</evidence>
<evidence type="ECO:0007829" key="2">
    <source>
        <dbReference type="PDB" id="1MHY"/>
    </source>
</evidence>
<evidence type="ECO:0007829" key="3">
    <source>
        <dbReference type="PDB" id="1MHZ"/>
    </source>
</evidence>
<accession>P27354</accession>
<feature type="initiator methionine" description="Removed" evidence="1">
    <location>
        <position position="1"/>
    </location>
</feature>
<feature type="chain" id="PRO_0000096408" description="Methane monooxygenase component A beta chain">
    <location>
        <begin position="2"/>
        <end position="394"/>
    </location>
</feature>
<feature type="turn" evidence="2">
    <location>
        <begin position="13"/>
        <end position="15"/>
    </location>
</feature>
<feature type="helix" evidence="2">
    <location>
        <begin position="17"/>
        <end position="26"/>
    </location>
</feature>
<feature type="turn" evidence="2">
    <location>
        <begin position="38"/>
        <end position="41"/>
    </location>
</feature>
<feature type="strand" evidence="2">
    <location>
        <begin position="45"/>
        <end position="48"/>
    </location>
</feature>
<feature type="helix" evidence="2">
    <location>
        <begin position="51"/>
        <end position="56"/>
    </location>
</feature>
<feature type="helix" evidence="2">
    <location>
        <begin position="88"/>
        <end position="90"/>
    </location>
</feature>
<feature type="helix" evidence="3">
    <location>
        <begin position="98"/>
        <end position="100"/>
    </location>
</feature>
<feature type="helix" evidence="2">
    <location>
        <begin position="109"/>
        <end position="133"/>
    </location>
</feature>
<feature type="helix" evidence="2">
    <location>
        <begin position="135"/>
        <end position="138"/>
    </location>
</feature>
<feature type="helix" evidence="2">
    <location>
        <begin position="141"/>
        <end position="145"/>
    </location>
</feature>
<feature type="helix" evidence="2">
    <location>
        <begin position="148"/>
        <end position="172"/>
    </location>
</feature>
<feature type="helix" evidence="2">
    <location>
        <begin position="176"/>
        <end position="206"/>
    </location>
</feature>
<feature type="helix" evidence="2">
    <location>
        <begin position="215"/>
        <end position="223"/>
    </location>
</feature>
<feature type="helix" evidence="2">
    <location>
        <begin position="225"/>
        <end position="227"/>
    </location>
</feature>
<feature type="helix" evidence="2">
    <location>
        <begin position="228"/>
        <end position="239"/>
    </location>
</feature>
<feature type="helix" evidence="2">
    <location>
        <begin position="244"/>
        <end position="253"/>
    </location>
</feature>
<feature type="helix" evidence="2">
    <location>
        <begin position="255"/>
        <end position="264"/>
    </location>
</feature>
<feature type="turn" evidence="2">
    <location>
        <begin position="265"/>
        <end position="267"/>
    </location>
</feature>
<feature type="helix" evidence="2">
    <location>
        <begin position="268"/>
        <end position="272"/>
    </location>
</feature>
<feature type="turn" evidence="2">
    <location>
        <begin position="273"/>
        <end position="276"/>
    </location>
</feature>
<feature type="helix" evidence="2">
    <location>
        <begin position="280"/>
        <end position="302"/>
    </location>
</feature>
<feature type="helix" evidence="2">
    <location>
        <begin position="303"/>
        <end position="307"/>
    </location>
</feature>
<feature type="turn" evidence="2">
    <location>
        <begin position="310"/>
        <end position="312"/>
    </location>
</feature>
<feature type="helix" evidence="2">
    <location>
        <begin position="313"/>
        <end position="338"/>
    </location>
</feature>
<feature type="helix" evidence="2">
    <location>
        <begin position="339"/>
        <end position="344"/>
    </location>
</feature>
<feature type="turn" evidence="2">
    <location>
        <begin position="348"/>
        <end position="350"/>
    </location>
</feature>
<feature type="helix" evidence="2">
    <location>
        <begin position="360"/>
        <end position="368"/>
    </location>
</feature>
<feature type="turn" evidence="3">
    <location>
        <begin position="373"/>
        <end position="376"/>
    </location>
</feature>
<feature type="helix" evidence="2">
    <location>
        <begin position="381"/>
        <end position="389"/>
    </location>
</feature>
<sequence length="394" mass="45020">MSQPQSSQVTKRGLTDPERAAIIAAAVPDHALDTQRKYHYFIQPRWKPLSEYEQLSCYAQPNPDWIAGGLDWGDWTQKFHGGRPSWGNESTELRTTDWYRHRDPARRWHHPYVKDKSEEARYTQRFLAAYSSEGSIRTIDPYWRDEILNKYFGALLYSEYGLFNAHSSVGRDCLSDTIRQTAVFAALDKVDNAQMIQMERLFIAKLVPGFDASTDVPKKIWTTDPIYSGARATVQEIWQGVQDWNEILWAGHAVMIATFGQFARREFFQRLATVYGDTLTPFFTAQSQTYFQTTRGAIDDLFVYCLANDSEFGAHNRTFLNAWTEHYLASSVAALKDFVGLYAKVEKSRADRSRRRLRGAAASSAIGRSITPDKIGFRVDVDQKVDAVLAGYKN</sequence>
<comment type="function">
    <text>Responsible for the initial oxygenation of methane to methanol in methanotrophs. It also catalyzes the monohydroxylation of a variety of unactivated alkenes, alicyclic, aromatic and heterocyclic compounds.</text>
</comment>
<comment type="catalytic activity">
    <reaction>
        <text>methane + NADH + O2 + H(+) = methanol + NAD(+) + H2O</text>
        <dbReference type="Rhea" id="RHEA:13637"/>
        <dbReference type="ChEBI" id="CHEBI:15377"/>
        <dbReference type="ChEBI" id="CHEBI:15378"/>
        <dbReference type="ChEBI" id="CHEBI:15379"/>
        <dbReference type="ChEBI" id="CHEBI:16183"/>
        <dbReference type="ChEBI" id="CHEBI:17790"/>
        <dbReference type="ChEBI" id="CHEBI:57540"/>
        <dbReference type="ChEBI" id="CHEBI:57945"/>
        <dbReference type="EC" id="1.14.13.25"/>
    </reaction>
</comment>
<comment type="catalytic activity">
    <reaction>
        <text>methane + NADPH + O2 + H(+) = methanol + NADP(+) + H2O</text>
        <dbReference type="Rhea" id="RHEA:13641"/>
        <dbReference type="ChEBI" id="CHEBI:15377"/>
        <dbReference type="ChEBI" id="CHEBI:15378"/>
        <dbReference type="ChEBI" id="CHEBI:15379"/>
        <dbReference type="ChEBI" id="CHEBI:16183"/>
        <dbReference type="ChEBI" id="CHEBI:17790"/>
        <dbReference type="ChEBI" id="CHEBI:57783"/>
        <dbReference type="ChEBI" id="CHEBI:58349"/>
        <dbReference type="EC" id="1.14.13.25"/>
    </reaction>
</comment>
<comment type="subunit">
    <text>M.trichosporium has two forms of methane monooxygenase, a soluble and a membrane-bound type. The soluble type consists of four components (A to D): protein A, comprising three chains, in an alpha-2, beta-2, gamma-2 configuration, is a nonheme iron protein containing an unusual mu-hydroxo bridge structure at its active site and interacts with both oxygen and methane.</text>
</comment>
<keyword id="KW-0002">3D-structure</keyword>
<keyword id="KW-0903">Direct protein sequencing</keyword>
<keyword id="KW-0503">Monooxygenase</keyword>
<keyword id="KW-0521">NADP</keyword>
<keyword id="KW-0554">One-carbon metabolism</keyword>
<keyword id="KW-0560">Oxidoreductase</keyword>
<name>MEMB_METTR</name>